<protein>
    <recommendedName>
        <fullName evidence="1">Adenine phosphoribosyltransferase</fullName>
        <shortName evidence="1">APRT</shortName>
        <ecNumber evidence="1">2.4.2.7</ecNumber>
    </recommendedName>
</protein>
<accession>Q0SRP2</accession>
<keyword id="KW-0963">Cytoplasm</keyword>
<keyword id="KW-0328">Glycosyltransferase</keyword>
<keyword id="KW-0660">Purine salvage</keyword>
<keyword id="KW-0808">Transferase</keyword>
<dbReference type="EC" id="2.4.2.7" evidence="1"/>
<dbReference type="EMBL" id="CP000312">
    <property type="protein sequence ID" value="ABG85608.1"/>
    <property type="molecule type" value="Genomic_DNA"/>
</dbReference>
<dbReference type="RefSeq" id="WP_003451591.1">
    <property type="nucleotide sequence ID" value="NZ_CAXVKH010000002.1"/>
</dbReference>
<dbReference type="SMR" id="Q0SRP2"/>
<dbReference type="KEGG" id="cpr:CPR_1905"/>
<dbReference type="UniPathway" id="UPA00588">
    <property type="reaction ID" value="UER00646"/>
</dbReference>
<dbReference type="Proteomes" id="UP000001824">
    <property type="component" value="Chromosome"/>
</dbReference>
<dbReference type="GO" id="GO:0005737">
    <property type="term" value="C:cytoplasm"/>
    <property type="evidence" value="ECO:0007669"/>
    <property type="project" value="UniProtKB-SubCell"/>
</dbReference>
<dbReference type="GO" id="GO:0003999">
    <property type="term" value="F:adenine phosphoribosyltransferase activity"/>
    <property type="evidence" value="ECO:0007669"/>
    <property type="project" value="UniProtKB-UniRule"/>
</dbReference>
<dbReference type="GO" id="GO:0006168">
    <property type="term" value="P:adenine salvage"/>
    <property type="evidence" value="ECO:0007669"/>
    <property type="project" value="InterPro"/>
</dbReference>
<dbReference type="GO" id="GO:0044209">
    <property type="term" value="P:AMP salvage"/>
    <property type="evidence" value="ECO:0007669"/>
    <property type="project" value="UniProtKB-UniRule"/>
</dbReference>
<dbReference type="GO" id="GO:0006166">
    <property type="term" value="P:purine ribonucleoside salvage"/>
    <property type="evidence" value="ECO:0007669"/>
    <property type="project" value="UniProtKB-KW"/>
</dbReference>
<dbReference type="CDD" id="cd06223">
    <property type="entry name" value="PRTases_typeI"/>
    <property type="match status" value="1"/>
</dbReference>
<dbReference type="FunFam" id="3.40.50.2020:FF:000004">
    <property type="entry name" value="Adenine phosphoribosyltransferase"/>
    <property type="match status" value="1"/>
</dbReference>
<dbReference type="Gene3D" id="3.40.50.2020">
    <property type="match status" value="1"/>
</dbReference>
<dbReference type="HAMAP" id="MF_00004">
    <property type="entry name" value="Aden_phosphoribosyltr"/>
    <property type="match status" value="1"/>
</dbReference>
<dbReference type="InterPro" id="IPR005764">
    <property type="entry name" value="Ade_phspho_trans"/>
</dbReference>
<dbReference type="InterPro" id="IPR050120">
    <property type="entry name" value="Adenine_PRTase"/>
</dbReference>
<dbReference type="InterPro" id="IPR000836">
    <property type="entry name" value="PRibTrfase_dom"/>
</dbReference>
<dbReference type="InterPro" id="IPR029057">
    <property type="entry name" value="PRTase-like"/>
</dbReference>
<dbReference type="NCBIfam" id="TIGR01090">
    <property type="entry name" value="apt"/>
    <property type="match status" value="1"/>
</dbReference>
<dbReference type="NCBIfam" id="NF002633">
    <property type="entry name" value="PRK02304.1-2"/>
    <property type="match status" value="1"/>
</dbReference>
<dbReference type="NCBIfam" id="NF002634">
    <property type="entry name" value="PRK02304.1-3"/>
    <property type="match status" value="1"/>
</dbReference>
<dbReference type="NCBIfam" id="NF002636">
    <property type="entry name" value="PRK02304.1-5"/>
    <property type="match status" value="1"/>
</dbReference>
<dbReference type="PANTHER" id="PTHR11776">
    <property type="entry name" value="ADENINE PHOSPHORIBOSYLTRANSFERASE"/>
    <property type="match status" value="1"/>
</dbReference>
<dbReference type="PANTHER" id="PTHR11776:SF7">
    <property type="entry name" value="PHOSPHORIBOSYLTRANSFERASE DOMAIN-CONTAINING PROTEIN"/>
    <property type="match status" value="1"/>
</dbReference>
<dbReference type="Pfam" id="PF00156">
    <property type="entry name" value="Pribosyltran"/>
    <property type="match status" value="1"/>
</dbReference>
<dbReference type="SUPFAM" id="SSF53271">
    <property type="entry name" value="PRTase-like"/>
    <property type="match status" value="1"/>
</dbReference>
<gene>
    <name evidence="1" type="primary">apt</name>
    <name type="ordered locus">CPR_1905</name>
</gene>
<sequence>MSLKDKIRVIEDFPKKGISFKDITTLIADGEGLRDSVDQMAEFFKDKNIDVVVGPEARGFIFGVPVAYALGVGFIPVRKPGKLPGDTVRVEYDLEYGKDALEIHKDAIKPGMRVAIVDDLLATGGTIAAVAKLVEQAGGEVAGLAFTIELTELKGRDKLKGYEVTSLVDYDV</sequence>
<reference key="1">
    <citation type="journal article" date="2006" name="Genome Res.">
        <title>Skewed genomic variability in strains of the toxigenic bacterial pathogen, Clostridium perfringens.</title>
        <authorList>
            <person name="Myers G.S.A."/>
            <person name="Rasko D.A."/>
            <person name="Cheung J.K."/>
            <person name="Ravel J."/>
            <person name="Seshadri R."/>
            <person name="DeBoy R.T."/>
            <person name="Ren Q."/>
            <person name="Varga J."/>
            <person name="Awad M.M."/>
            <person name="Brinkac L.M."/>
            <person name="Daugherty S.C."/>
            <person name="Haft D.H."/>
            <person name="Dodson R.J."/>
            <person name="Madupu R."/>
            <person name="Nelson W.C."/>
            <person name="Rosovitz M.J."/>
            <person name="Sullivan S.A."/>
            <person name="Khouri H."/>
            <person name="Dimitrov G.I."/>
            <person name="Watkins K.L."/>
            <person name="Mulligan S."/>
            <person name="Benton J."/>
            <person name="Radune D."/>
            <person name="Fisher D.J."/>
            <person name="Atkins H.S."/>
            <person name="Hiscox T."/>
            <person name="Jost B.H."/>
            <person name="Billington S.J."/>
            <person name="Songer J.G."/>
            <person name="McClane B.A."/>
            <person name="Titball R.W."/>
            <person name="Rood J.I."/>
            <person name="Melville S.B."/>
            <person name="Paulsen I.T."/>
        </authorList>
    </citation>
    <scope>NUCLEOTIDE SEQUENCE [LARGE SCALE GENOMIC DNA]</scope>
    <source>
        <strain>SM101 / Type A</strain>
    </source>
</reference>
<organism>
    <name type="scientific">Clostridium perfringens (strain SM101 / Type A)</name>
    <dbReference type="NCBI Taxonomy" id="289380"/>
    <lineage>
        <taxon>Bacteria</taxon>
        <taxon>Bacillati</taxon>
        <taxon>Bacillota</taxon>
        <taxon>Clostridia</taxon>
        <taxon>Eubacteriales</taxon>
        <taxon>Clostridiaceae</taxon>
        <taxon>Clostridium</taxon>
    </lineage>
</organism>
<evidence type="ECO:0000255" key="1">
    <source>
        <dbReference type="HAMAP-Rule" id="MF_00004"/>
    </source>
</evidence>
<name>APT_CLOPS</name>
<feature type="chain" id="PRO_0000329343" description="Adenine phosphoribosyltransferase">
    <location>
        <begin position="1"/>
        <end position="172"/>
    </location>
</feature>
<proteinExistence type="inferred from homology"/>
<comment type="function">
    <text evidence="1">Catalyzes a salvage reaction resulting in the formation of AMP, that is energically less costly than de novo synthesis.</text>
</comment>
<comment type="catalytic activity">
    <reaction evidence="1">
        <text>AMP + diphosphate = 5-phospho-alpha-D-ribose 1-diphosphate + adenine</text>
        <dbReference type="Rhea" id="RHEA:16609"/>
        <dbReference type="ChEBI" id="CHEBI:16708"/>
        <dbReference type="ChEBI" id="CHEBI:33019"/>
        <dbReference type="ChEBI" id="CHEBI:58017"/>
        <dbReference type="ChEBI" id="CHEBI:456215"/>
        <dbReference type="EC" id="2.4.2.7"/>
    </reaction>
</comment>
<comment type="pathway">
    <text evidence="1">Purine metabolism; AMP biosynthesis via salvage pathway; AMP from adenine: step 1/1.</text>
</comment>
<comment type="subunit">
    <text evidence="1">Homodimer.</text>
</comment>
<comment type="subcellular location">
    <subcellularLocation>
        <location evidence="1">Cytoplasm</location>
    </subcellularLocation>
</comment>
<comment type="similarity">
    <text evidence="1">Belongs to the purine/pyrimidine phosphoribosyltransferase family.</text>
</comment>